<feature type="chain" id="PRO_0000134744" description="6,7-dimethyl-8-ribityllumazine synthase">
    <location>
        <begin position="1"/>
        <end position="153"/>
    </location>
</feature>
<feature type="active site" description="Proton donor" evidence="1">
    <location>
        <position position="88"/>
    </location>
</feature>
<feature type="binding site" evidence="1">
    <location>
        <position position="22"/>
    </location>
    <ligand>
        <name>5-amino-6-(D-ribitylamino)uracil</name>
        <dbReference type="ChEBI" id="CHEBI:15934"/>
    </ligand>
</feature>
<feature type="binding site" evidence="1">
    <location>
        <begin position="56"/>
        <end position="58"/>
    </location>
    <ligand>
        <name>5-amino-6-(D-ribitylamino)uracil</name>
        <dbReference type="ChEBI" id="CHEBI:15934"/>
    </ligand>
</feature>
<feature type="binding site" evidence="1">
    <location>
        <begin position="80"/>
        <end position="82"/>
    </location>
    <ligand>
        <name>5-amino-6-(D-ribitylamino)uracil</name>
        <dbReference type="ChEBI" id="CHEBI:15934"/>
    </ligand>
</feature>
<feature type="binding site" evidence="1">
    <location>
        <begin position="85"/>
        <end position="86"/>
    </location>
    <ligand>
        <name>(2S)-2-hydroxy-3-oxobutyl phosphate</name>
        <dbReference type="ChEBI" id="CHEBI:58830"/>
    </ligand>
</feature>
<feature type="binding site" evidence="1">
    <location>
        <position position="113"/>
    </location>
    <ligand>
        <name>5-amino-6-(D-ribitylamino)uracil</name>
        <dbReference type="ChEBI" id="CHEBI:15934"/>
    </ligand>
</feature>
<feature type="binding site" evidence="1">
    <location>
        <position position="127"/>
    </location>
    <ligand>
        <name>(2S)-2-hydroxy-3-oxobutyl phosphate</name>
        <dbReference type="ChEBI" id="CHEBI:58830"/>
    </ligand>
</feature>
<proteinExistence type="inferred from homology"/>
<protein>
    <recommendedName>
        <fullName evidence="1">6,7-dimethyl-8-ribityllumazine synthase</fullName>
        <shortName evidence="1">DMRL synthase</shortName>
        <shortName evidence="1">LS</shortName>
        <shortName evidence="1">Lumazine synthase</shortName>
        <ecNumber evidence="1">2.5.1.78</ecNumber>
    </recommendedName>
</protein>
<keyword id="KW-1185">Reference proteome</keyword>
<keyword id="KW-0686">Riboflavin biosynthesis</keyword>
<keyword id="KW-0808">Transferase</keyword>
<sequence>MRILEGNLIGQDKKFAIVAGRFNEFIVSKLIGGALDAFKRHGVEEENIDLAWVPGAFEIPLIAKKLAKSGKYAGVVCLGTVIRGATSHYDYVCGEVSKGIANVSLDTEVPVIFGIVTTENIEQAIERAGTKAGNKGFDAAMAAIEMANLLENI</sequence>
<accession>Q8XMW9</accession>
<gene>
    <name evidence="1" type="primary">ribH</name>
    <name type="synonym">risB</name>
    <name type="ordered locus">CPE0569</name>
</gene>
<name>RISB_CLOPE</name>
<reference key="1">
    <citation type="journal article" date="2002" name="Proc. Natl. Acad. Sci. U.S.A.">
        <title>Complete genome sequence of Clostridium perfringens, an anaerobic flesh-eater.</title>
        <authorList>
            <person name="Shimizu T."/>
            <person name="Ohtani K."/>
            <person name="Hirakawa H."/>
            <person name="Ohshima K."/>
            <person name="Yamashita A."/>
            <person name="Shiba T."/>
            <person name="Ogasawara N."/>
            <person name="Hattori M."/>
            <person name="Kuhara S."/>
            <person name="Hayashi H."/>
        </authorList>
    </citation>
    <scope>NUCLEOTIDE SEQUENCE [LARGE SCALE GENOMIC DNA]</scope>
    <source>
        <strain>13 / Type A</strain>
    </source>
</reference>
<evidence type="ECO:0000255" key="1">
    <source>
        <dbReference type="HAMAP-Rule" id="MF_00178"/>
    </source>
</evidence>
<comment type="function">
    <text evidence="1">Catalyzes the formation of 6,7-dimethyl-8-ribityllumazine by condensation of 5-amino-6-(D-ribitylamino)uracil with 3,4-dihydroxy-2-butanone 4-phosphate. This is the penultimate step in the biosynthesis of riboflavin.</text>
</comment>
<comment type="catalytic activity">
    <reaction evidence="1">
        <text>(2S)-2-hydroxy-3-oxobutyl phosphate + 5-amino-6-(D-ribitylamino)uracil = 6,7-dimethyl-8-(1-D-ribityl)lumazine + phosphate + 2 H2O + H(+)</text>
        <dbReference type="Rhea" id="RHEA:26152"/>
        <dbReference type="ChEBI" id="CHEBI:15377"/>
        <dbReference type="ChEBI" id="CHEBI:15378"/>
        <dbReference type="ChEBI" id="CHEBI:15934"/>
        <dbReference type="ChEBI" id="CHEBI:43474"/>
        <dbReference type="ChEBI" id="CHEBI:58201"/>
        <dbReference type="ChEBI" id="CHEBI:58830"/>
        <dbReference type="EC" id="2.5.1.78"/>
    </reaction>
</comment>
<comment type="pathway">
    <text evidence="1">Cofactor biosynthesis; riboflavin biosynthesis; riboflavin from 2-hydroxy-3-oxobutyl phosphate and 5-amino-6-(D-ribitylamino)uracil: step 1/2.</text>
</comment>
<comment type="similarity">
    <text evidence="1">Belongs to the DMRL synthase family.</text>
</comment>
<dbReference type="EC" id="2.5.1.78" evidence="1"/>
<dbReference type="EMBL" id="BA000016">
    <property type="protein sequence ID" value="BAB80275.1"/>
    <property type="molecule type" value="Genomic_DNA"/>
</dbReference>
<dbReference type="SMR" id="Q8XMW9"/>
<dbReference type="STRING" id="195102.gene:10489826"/>
<dbReference type="KEGG" id="cpe:CPE0569"/>
<dbReference type="HOGENOM" id="CLU_089358_1_1_9"/>
<dbReference type="BRENDA" id="2.5.1.78">
    <property type="organism ID" value="1503"/>
</dbReference>
<dbReference type="UniPathway" id="UPA00275">
    <property type="reaction ID" value="UER00404"/>
</dbReference>
<dbReference type="Proteomes" id="UP000000818">
    <property type="component" value="Chromosome"/>
</dbReference>
<dbReference type="GO" id="GO:0005829">
    <property type="term" value="C:cytosol"/>
    <property type="evidence" value="ECO:0007669"/>
    <property type="project" value="TreeGrafter"/>
</dbReference>
<dbReference type="GO" id="GO:0009349">
    <property type="term" value="C:riboflavin synthase complex"/>
    <property type="evidence" value="ECO:0007669"/>
    <property type="project" value="InterPro"/>
</dbReference>
<dbReference type="GO" id="GO:0000906">
    <property type="term" value="F:6,7-dimethyl-8-ribityllumazine synthase activity"/>
    <property type="evidence" value="ECO:0007669"/>
    <property type="project" value="UniProtKB-UniRule"/>
</dbReference>
<dbReference type="GO" id="GO:0009231">
    <property type="term" value="P:riboflavin biosynthetic process"/>
    <property type="evidence" value="ECO:0007669"/>
    <property type="project" value="UniProtKB-UniRule"/>
</dbReference>
<dbReference type="CDD" id="cd09209">
    <property type="entry name" value="Lumazine_synthase-I"/>
    <property type="match status" value="1"/>
</dbReference>
<dbReference type="FunFam" id="3.40.50.960:FF:000001">
    <property type="entry name" value="6,7-dimethyl-8-ribityllumazine synthase"/>
    <property type="match status" value="1"/>
</dbReference>
<dbReference type="Gene3D" id="3.40.50.960">
    <property type="entry name" value="Lumazine/riboflavin synthase"/>
    <property type="match status" value="1"/>
</dbReference>
<dbReference type="HAMAP" id="MF_00178">
    <property type="entry name" value="Lumazine_synth"/>
    <property type="match status" value="1"/>
</dbReference>
<dbReference type="InterPro" id="IPR034964">
    <property type="entry name" value="LS"/>
</dbReference>
<dbReference type="InterPro" id="IPR002180">
    <property type="entry name" value="LS/RS"/>
</dbReference>
<dbReference type="InterPro" id="IPR036467">
    <property type="entry name" value="LS/RS_sf"/>
</dbReference>
<dbReference type="NCBIfam" id="TIGR00114">
    <property type="entry name" value="lumazine-synth"/>
    <property type="match status" value="1"/>
</dbReference>
<dbReference type="NCBIfam" id="NF000812">
    <property type="entry name" value="PRK00061.1-4"/>
    <property type="match status" value="1"/>
</dbReference>
<dbReference type="PANTHER" id="PTHR21058:SF0">
    <property type="entry name" value="6,7-DIMETHYL-8-RIBITYLLUMAZINE SYNTHASE"/>
    <property type="match status" value="1"/>
</dbReference>
<dbReference type="PANTHER" id="PTHR21058">
    <property type="entry name" value="6,7-DIMETHYL-8-RIBITYLLUMAZINE SYNTHASE DMRL SYNTHASE LUMAZINE SYNTHASE"/>
    <property type="match status" value="1"/>
</dbReference>
<dbReference type="Pfam" id="PF00885">
    <property type="entry name" value="DMRL_synthase"/>
    <property type="match status" value="1"/>
</dbReference>
<dbReference type="SUPFAM" id="SSF52121">
    <property type="entry name" value="Lumazine synthase"/>
    <property type="match status" value="1"/>
</dbReference>
<organism>
    <name type="scientific">Clostridium perfringens (strain 13 / Type A)</name>
    <dbReference type="NCBI Taxonomy" id="195102"/>
    <lineage>
        <taxon>Bacteria</taxon>
        <taxon>Bacillati</taxon>
        <taxon>Bacillota</taxon>
        <taxon>Clostridia</taxon>
        <taxon>Eubacteriales</taxon>
        <taxon>Clostridiaceae</taxon>
        <taxon>Clostridium</taxon>
    </lineage>
</organism>